<protein>
    <recommendedName>
        <fullName>Protein VACUOLELESS1</fullName>
    </recommendedName>
    <alternativeName>
        <fullName>Vacuolar protein sorting-associated protein 16 homolog</fullName>
    </alternativeName>
</protein>
<evidence type="ECO:0000269" key="1">
    <source>
    </source>
</evidence>
<evidence type="ECO:0000269" key="2">
    <source>
    </source>
</evidence>
<evidence type="ECO:0000269" key="3">
    <source>
    </source>
</evidence>
<evidence type="ECO:0000269" key="4">
    <source>
    </source>
</evidence>
<evidence type="ECO:0000303" key="5">
    <source>
    </source>
</evidence>
<evidence type="ECO:0000305" key="6"/>
<reference key="1">
    <citation type="journal article" date="2001" name="Dev. Cell">
        <title>VACUOLELESS1 is an essential gene required for vacuole formation and morphogenesis in Arabidopsis.</title>
        <authorList>
            <person name="Rojo E."/>
            <person name="Gillmor C.S."/>
            <person name="Kovaleva V."/>
            <person name="Somerville C.R."/>
            <person name="Raikhel N.V."/>
        </authorList>
    </citation>
    <scope>NUCLEOTIDE SEQUENCE [MRNA] (ISOFORM 1)</scope>
    <scope>FUNCTION</scope>
    <scope>DISRUPTION PHENOTYPE</scope>
    <scope>TISSUE SPECIFICITY</scope>
    <scope>DEVELOPMENTAL STAGE</scope>
</reference>
<reference key="2">
    <citation type="journal article" date="1999" name="Nature">
        <title>Sequence and analysis of chromosome 2 of the plant Arabidopsis thaliana.</title>
        <authorList>
            <person name="Lin X."/>
            <person name="Kaul S."/>
            <person name="Rounsley S.D."/>
            <person name="Shea T.P."/>
            <person name="Benito M.-I."/>
            <person name="Town C.D."/>
            <person name="Fujii C.Y."/>
            <person name="Mason T.M."/>
            <person name="Bowman C.L."/>
            <person name="Barnstead M.E."/>
            <person name="Feldblyum T.V."/>
            <person name="Buell C.R."/>
            <person name="Ketchum K.A."/>
            <person name="Lee J.J."/>
            <person name="Ronning C.M."/>
            <person name="Koo H.L."/>
            <person name="Moffat K.S."/>
            <person name="Cronin L.A."/>
            <person name="Shen M."/>
            <person name="Pai G."/>
            <person name="Van Aken S."/>
            <person name="Umayam L."/>
            <person name="Tallon L.J."/>
            <person name="Gill J.E."/>
            <person name="Adams M.D."/>
            <person name="Carrera A.J."/>
            <person name="Creasy T.H."/>
            <person name="Goodman H.M."/>
            <person name="Somerville C.R."/>
            <person name="Copenhaver G.P."/>
            <person name="Preuss D."/>
            <person name="Nierman W.C."/>
            <person name="White O."/>
            <person name="Eisen J.A."/>
            <person name="Salzberg S.L."/>
            <person name="Fraser C.M."/>
            <person name="Venter J.C."/>
        </authorList>
    </citation>
    <scope>NUCLEOTIDE SEQUENCE [LARGE SCALE GENOMIC DNA]</scope>
    <source>
        <strain>cv. Columbia</strain>
    </source>
</reference>
<reference key="3">
    <citation type="journal article" date="2017" name="Plant J.">
        <title>Araport11: a complete reannotation of the Arabidopsis thaliana reference genome.</title>
        <authorList>
            <person name="Cheng C.Y."/>
            <person name="Krishnakumar V."/>
            <person name="Chan A.P."/>
            <person name="Thibaud-Nissen F."/>
            <person name="Schobel S."/>
            <person name="Town C.D."/>
        </authorList>
    </citation>
    <scope>GENOME REANNOTATION</scope>
    <source>
        <strain>cv. Columbia</strain>
    </source>
</reference>
<reference key="4">
    <citation type="journal article" date="2003" name="Science">
        <title>Empirical analysis of transcriptional activity in the Arabidopsis genome.</title>
        <authorList>
            <person name="Yamada K."/>
            <person name="Lim J."/>
            <person name="Dale J.M."/>
            <person name="Chen H."/>
            <person name="Shinn P."/>
            <person name="Palm C.J."/>
            <person name="Southwick A.M."/>
            <person name="Wu H.C."/>
            <person name="Kim C.J."/>
            <person name="Nguyen M."/>
            <person name="Pham P.K."/>
            <person name="Cheuk R.F."/>
            <person name="Karlin-Newmann G."/>
            <person name="Liu S.X."/>
            <person name="Lam B."/>
            <person name="Sakano H."/>
            <person name="Wu T."/>
            <person name="Yu G."/>
            <person name="Miranda M."/>
            <person name="Quach H.L."/>
            <person name="Tripp M."/>
            <person name="Chang C.H."/>
            <person name="Lee J.M."/>
            <person name="Toriumi M.J."/>
            <person name="Chan M.M."/>
            <person name="Tang C.C."/>
            <person name="Onodera C.S."/>
            <person name="Deng J.M."/>
            <person name="Akiyama K."/>
            <person name="Ansari Y."/>
            <person name="Arakawa T."/>
            <person name="Banh J."/>
            <person name="Banno F."/>
            <person name="Bowser L."/>
            <person name="Brooks S.Y."/>
            <person name="Carninci P."/>
            <person name="Chao Q."/>
            <person name="Choy N."/>
            <person name="Enju A."/>
            <person name="Goldsmith A.D."/>
            <person name="Gurjal M."/>
            <person name="Hansen N.F."/>
            <person name="Hayashizaki Y."/>
            <person name="Johnson-Hopson C."/>
            <person name="Hsuan V.W."/>
            <person name="Iida K."/>
            <person name="Karnes M."/>
            <person name="Khan S."/>
            <person name="Koesema E."/>
            <person name="Ishida J."/>
            <person name="Jiang P.X."/>
            <person name="Jones T."/>
            <person name="Kawai J."/>
            <person name="Kamiya A."/>
            <person name="Meyers C."/>
            <person name="Nakajima M."/>
            <person name="Narusaka M."/>
            <person name="Seki M."/>
            <person name="Sakurai T."/>
            <person name="Satou M."/>
            <person name="Tamse R."/>
            <person name="Vaysberg M."/>
            <person name="Wallender E.K."/>
            <person name="Wong C."/>
            <person name="Yamamura Y."/>
            <person name="Yuan S."/>
            <person name="Shinozaki K."/>
            <person name="Davis R.W."/>
            <person name="Theologis A."/>
            <person name="Ecker J.R."/>
        </authorList>
    </citation>
    <scope>NUCLEOTIDE SEQUENCE [LARGE SCALE MRNA] (ISOFORM 1)</scope>
    <source>
        <strain>cv. Columbia</strain>
    </source>
</reference>
<reference key="5">
    <citation type="journal article" date="2009" name="DNA Res.">
        <title>Analysis of multiple occurrences of alternative splicing events in Arabidopsis thaliana using novel sequenced full-length cDNAs.</title>
        <authorList>
            <person name="Iida K."/>
            <person name="Fukami-Kobayashi K."/>
            <person name="Toyoda A."/>
            <person name="Sakaki Y."/>
            <person name="Kobayashi M."/>
            <person name="Seki M."/>
            <person name="Shinozaki K."/>
        </authorList>
    </citation>
    <scope>NUCLEOTIDE SEQUENCE [LARGE SCALE MRNA] OF 309-834 (ISOFORM 2)</scope>
    <source>
        <tissue>Root</tissue>
    </source>
</reference>
<reference key="6">
    <citation type="journal article" date="2003" name="Mol. Biol. Cell">
        <title>The AtC-VPS protein complex is localized to the tonoplast and the prevacuolar compartment in arabidopsis.</title>
        <authorList>
            <person name="Rojo E."/>
            <person name="Zouhar J."/>
            <person name="Kovaleva V."/>
            <person name="Hong S."/>
            <person name="Raikhel N.V."/>
        </authorList>
    </citation>
    <scope>IDENTIFICATION IN THE C-VSP COMPLEX</scope>
    <scope>TISSUE SPECIFICITY</scope>
    <scope>SUBCELLULAR LOCATION</scope>
</reference>
<reference key="7">
    <citation type="journal article" date="2004" name="Plant Physiol.">
        <title>Geminating pollen has tubular vacuoles, displays highly dynamic vacuole biogenesis, and requires VACUOLESS1 for proper function.</title>
        <authorList>
            <person name="Hicks G.R."/>
            <person name="Rojo E."/>
            <person name="Hong S."/>
            <person name="Carter D.G."/>
            <person name="Raikhel N.V."/>
        </authorList>
    </citation>
    <scope>FUNCTION</scope>
    <scope>TISSUE SPECIFICITY</scope>
</reference>
<reference key="8">
    <citation type="journal article" date="2018" name="Proc. Natl. Acad. Sci. U.S.A.">
        <title>Distinct sets of tethering complexes, SNARE complexes, and Rab GTPases mediate membrane fusion at the vacuole in Arabidopsis.</title>
        <authorList>
            <person name="Takemoto K."/>
            <person name="Ebine K."/>
            <person name="Askani J.C."/>
            <person name="Krueger F."/>
            <person name="Gonzalez Z.A."/>
            <person name="Ito E."/>
            <person name="Goh T."/>
            <person name="Schumacher K."/>
            <person name="Nakano A."/>
            <person name="Ueda T."/>
        </authorList>
    </citation>
    <scope>SUBUNIT</scope>
    <scope>IDENTIFICATION BY MASS SPECTROMETRY</scope>
</reference>
<feature type="chain" id="PRO_0000425970" description="Protein VACUOLELESS1">
    <location>
        <begin position="1"/>
        <end position="858"/>
    </location>
</feature>
<feature type="splice variant" id="VSP_053914" description="In isoform 2." evidence="5">
    <original>AYARIGMAKEAADCAAQANDGGELL</original>
    <variation>VCPAYKTCTWIIGLDMYKIYRNLLV</variation>
    <location>
        <begin position="810"/>
        <end position="834"/>
    </location>
</feature>
<feature type="splice variant" id="VSP_053915" description="In isoform 2." evidence="5">
    <location>
        <begin position="835"/>
        <end position="858"/>
    </location>
</feature>
<sequence length="858" mass="96632">MANVSVAAEWQLLYDRYYRKPEIYQMKWKHVDLSRNKVACASFGGPIAVIRDDSKIVQLYAESALRKLRIFNSAGILLSETVWKHPGGRLIGMSWSDDQTLICIVQDGTIYRYNIHAELIEPNMSMGQECFEQNVVECVFWGNGVVCLTEGGQLICIFDFKTMKPSKLPDVPGLAEDDLLQPICLTVREPKYTMSGIAEVLVAVGDDIFVVEEDMVQTIRFDEPSVDDSEMQNDDSGNLIGVVQKMIVSPNGKFLTLFTHDGRIVVVDMETKQIAIDYSCESALPPQQMAWCGMDSVLLYWDEDLMMVGPVGDPVHYFYDEPIILIPECDGVRILSNTNLEFLQRVPDSTESIFKIGSTSPAALLYDALDHFDRRSAKADENLRLIRSSLSEAVESCIDAAGHEFDVTRQRALLRAASYGQAFCSNFQRERVQETCRTLRVLNAVRDPAIGIPLSIQQYKLLTPVVLISRLINANCHLLALRISEYLDMNKEVVIMHWACAKITASPSTPDSHLLEILLDKLQLCKGISYAAVATHADNCGRRKLAAMLVEHEPRSTKQVPLLLSIGEEDTALVKATESGDTDLVYLVIFHIWQKRPPLEFFAMIQGRVLARDLFVAYARCHKHEFLKDFFLSTGQIHEVAFLLWKESWDMGKNPMASKGSPLHGPRIKLIEKARNLFSQTKEHTFESKAAEEHAKLLKIQHELEASTKQAIFVDSSINDTIRTCIVLGNNRAAIKVKTEFKVSDKRWYWLKAFALATIKDWAALEKFSKEKRPPMGFRPFVEACIDADEKAEALKYIPKLSDLVERGEAYARIGMAKEAADCAAQANDGGELLERFRKTFVQNAIFDTLLMPFQGAS</sequence>
<accession>Q93VQ0</accession>
<accession>B9DFU5</accession>
<accession>F4IRY5</accession>
<dbReference type="EMBL" id="AF359240">
    <property type="protein sequence ID" value="AAK43713.1"/>
    <property type="molecule type" value="mRNA"/>
</dbReference>
<dbReference type="EMBL" id="CP002685">
    <property type="protein sequence ID" value="AEC09479.1"/>
    <property type="molecule type" value="Genomic_DNA"/>
</dbReference>
<dbReference type="EMBL" id="CP002685">
    <property type="protein sequence ID" value="AEC09480.1"/>
    <property type="molecule type" value="Genomic_DNA"/>
</dbReference>
<dbReference type="EMBL" id="AY048248">
    <property type="protein sequence ID" value="AAK82510.1"/>
    <property type="molecule type" value="mRNA"/>
</dbReference>
<dbReference type="EMBL" id="AY139799">
    <property type="protein sequence ID" value="AAM98105.1"/>
    <property type="molecule type" value="mRNA"/>
</dbReference>
<dbReference type="EMBL" id="AK316906">
    <property type="protein sequence ID" value="BAH19612.1"/>
    <property type="molecule type" value="mRNA"/>
</dbReference>
<dbReference type="RefSeq" id="NP_001078020.1">
    <molecule id="Q93VQ0-2"/>
    <property type="nucleotide sequence ID" value="NM_001084551.1"/>
</dbReference>
<dbReference type="RefSeq" id="NP_565879.1">
    <molecule id="Q93VQ0-1"/>
    <property type="nucleotide sequence ID" value="NM_129359.4"/>
</dbReference>
<dbReference type="SMR" id="Q93VQ0"/>
<dbReference type="BioGRID" id="3724">
    <property type="interactions" value="5"/>
</dbReference>
<dbReference type="FunCoup" id="Q93VQ0">
    <property type="interactions" value="5317"/>
</dbReference>
<dbReference type="STRING" id="3702.Q93VQ0"/>
<dbReference type="iPTMnet" id="Q93VQ0"/>
<dbReference type="PaxDb" id="3702-AT2G38020.1"/>
<dbReference type="ProteomicsDB" id="242328">
    <molecule id="Q93VQ0-1"/>
</dbReference>
<dbReference type="EnsemblPlants" id="AT2G38020.1">
    <molecule id="Q93VQ0-1"/>
    <property type="protein sequence ID" value="AT2G38020.1"/>
    <property type="gene ID" value="AT2G38020"/>
</dbReference>
<dbReference type="EnsemblPlants" id="AT2G38020.2">
    <molecule id="Q93VQ0-2"/>
    <property type="protein sequence ID" value="AT2G38020.2"/>
    <property type="gene ID" value="AT2G38020"/>
</dbReference>
<dbReference type="GeneID" id="818380"/>
<dbReference type="Gramene" id="AT2G38020.1">
    <molecule id="Q93VQ0-1"/>
    <property type="protein sequence ID" value="AT2G38020.1"/>
    <property type="gene ID" value="AT2G38020"/>
</dbReference>
<dbReference type="Gramene" id="AT2G38020.2">
    <molecule id="Q93VQ0-2"/>
    <property type="protein sequence ID" value="AT2G38020.2"/>
    <property type="gene ID" value="AT2G38020"/>
</dbReference>
<dbReference type="KEGG" id="ath:AT2G38020"/>
<dbReference type="Araport" id="AT2G38020"/>
<dbReference type="TAIR" id="AT2G38020">
    <property type="gene designation" value="VCL1"/>
</dbReference>
<dbReference type="eggNOG" id="KOG2280">
    <property type="taxonomic scope" value="Eukaryota"/>
</dbReference>
<dbReference type="InParanoid" id="Q93VQ0"/>
<dbReference type="OMA" id="WCGDDCL"/>
<dbReference type="OrthoDB" id="1792at2759"/>
<dbReference type="PhylomeDB" id="Q93VQ0"/>
<dbReference type="PRO" id="PR:Q93VQ0"/>
<dbReference type="Proteomes" id="UP000006548">
    <property type="component" value="Chromosome 2"/>
</dbReference>
<dbReference type="ExpressionAtlas" id="Q93VQ0">
    <property type="expression patterns" value="baseline and differential"/>
</dbReference>
<dbReference type="GO" id="GO:0033263">
    <property type="term" value="C:CORVET complex"/>
    <property type="evidence" value="ECO:0000314"/>
    <property type="project" value="UniProtKB"/>
</dbReference>
<dbReference type="GO" id="GO:0005783">
    <property type="term" value="C:endoplasmic reticulum"/>
    <property type="evidence" value="ECO:0007005"/>
    <property type="project" value="TAIR"/>
</dbReference>
<dbReference type="GO" id="GO:0030897">
    <property type="term" value="C:HOPS complex"/>
    <property type="evidence" value="ECO:0000314"/>
    <property type="project" value="UniProtKB"/>
</dbReference>
<dbReference type="GO" id="GO:0009705">
    <property type="term" value="C:plant-type vacuole membrane"/>
    <property type="evidence" value="ECO:0000314"/>
    <property type="project" value="TAIR"/>
</dbReference>
<dbReference type="GO" id="GO:0032991">
    <property type="term" value="C:protein-containing complex"/>
    <property type="evidence" value="ECO:0000353"/>
    <property type="project" value="UniProtKB"/>
</dbReference>
<dbReference type="GO" id="GO:0006886">
    <property type="term" value="P:intracellular protein transport"/>
    <property type="evidence" value="ECO:0007669"/>
    <property type="project" value="InterPro"/>
</dbReference>
<dbReference type="GO" id="GO:0045992">
    <property type="term" value="P:negative regulation of embryonic development"/>
    <property type="evidence" value="ECO:0000315"/>
    <property type="project" value="UniProtKB"/>
</dbReference>
<dbReference type="GO" id="GO:0007033">
    <property type="term" value="P:vacuole organization"/>
    <property type="evidence" value="ECO:0000315"/>
    <property type="project" value="UniProtKB"/>
</dbReference>
<dbReference type="GO" id="GO:0051469">
    <property type="term" value="P:vesicle fusion with vacuole"/>
    <property type="evidence" value="ECO:0000315"/>
    <property type="project" value="UniProtKB"/>
</dbReference>
<dbReference type="FunFam" id="1.10.150.780:FF:000001">
    <property type="entry name" value="Vacuolar protein sorting-associated protein 16 homolog"/>
    <property type="match status" value="1"/>
</dbReference>
<dbReference type="Gene3D" id="1.10.150.780">
    <property type="entry name" value="Vps16, C-terminal region"/>
    <property type="match status" value="1"/>
</dbReference>
<dbReference type="InterPro" id="IPR016534">
    <property type="entry name" value="VPS16"/>
</dbReference>
<dbReference type="InterPro" id="IPR006925">
    <property type="entry name" value="Vps16_C"/>
</dbReference>
<dbReference type="InterPro" id="IPR038132">
    <property type="entry name" value="Vps16_C_sf"/>
</dbReference>
<dbReference type="InterPro" id="IPR006926">
    <property type="entry name" value="Vps16_N"/>
</dbReference>
<dbReference type="InterPro" id="IPR036322">
    <property type="entry name" value="WD40_repeat_dom_sf"/>
</dbReference>
<dbReference type="PANTHER" id="PTHR12811">
    <property type="entry name" value="VACUOLAR PROTEIN SORTING VPS16"/>
    <property type="match status" value="1"/>
</dbReference>
<dbReference type="PANTHER" id="PTHR12811:SF0">
    <property type="entry name" value="VACUOLAR PROTEIN SORTING-ASSOCIATED PROTEIN 16 HOMOLOG"/>
    <property type="match status" value="1"/>
</dbReference>
<dbReference type="Pfam" id="PF04840">
    <property type="entry name" value="Vps16_C"/>
    <property type="match status" value="1"/>
</dbReference>
<dbReference type="Pfam" id="PF04841">
    <property type="entry name" value="Vps16_N"/>
    <property type="match status" value="1"/>
</dbReference>
<dbReference type="PIRSF" id="PIRSF007949">
    <property type="entry name" value="VPS16"/>
    <property type="match status" value="1"/>
</dbReference>
<dbReference type="SUPFAM" id="SSF50978">
    <property type="entry name" value="WD40 repeat-like"/>
    <property type="match status" value="1"/>
</dbReference>
<gene>
    <name type="primary">VCL1</name>
    <name type="ordered locus">At2g38020</name>
    <name type="ORF">T8P21.7</name>
</gene>
<comment type="function">
    <text evidence="1 3">Required for vacuole biogenesis and vacuole enlargment in dividing and expanding cells. Involved in the docking or fusion of prevacuolar vesicles. Important for the function of both male and female gametophytes, but is not essential for the germination and development of pollen.</text>
</comment>
<comment type="subunit">
    <text evidence="2 4">Core component of at least two putative endosomal tethering complexes, the homotypic fusion and vacuole protein sorting (HOPS) complex and the class C core vacuole/endosome tethering (CORVET) complex. Their common core is composed of the class C Vps proteins VPS11, VCL1, VPS18 and VPS33, which in HOPS further associates with VPS39 and VPS41 and in CORVET with VPS3.</text>
</comment>
<comment type="subcellular location">
    <subcellularLocation>
        <location evidence="2">Vacuole membrane</location>
        <topology evidence="2">Peripheral membrane protein</topology>
    </subcellularLocation>
    <subcellularLocation>
        <location evidence="2">Prevacuolar compartment membrane</location>
        <topology evidence="2">Peripheral membrane protein</topology>
    </subcellularLocation>
</comment>
<comment type="alternative products">
    <event type="alternative splicing"/>
    <isoform>
        <id>Q93VQ0-1</id>
        <name>1</name>
        <sequence type="displayed"/>
    </isoform>
    <isoform>
        <id>Q93VQ0-2</id>
        <name>2</name>
        <sequence type="described" ref="VSP_053914 VSP_053915"/>
    </isoform>
</comment>
<comment type="tissue specificity">
    <text evidence="1 2 3">Expressed in roots, leaves, stems, siliques, flowers and mature pollen.</text>
</comment>
<comment type="developmental stage">
    <text evidence="1">Expressed throughout development.</text>
</comment>
<comment type="disruption phenotype">
    <text evidence="1">Absence of vacuoles in the embryo and accumulation of small vesicles and autophagosomes. Embryo lethality at late torpedo stage.</text>
</comment>
<comment type="similarity">
    <text evidence="6">Belongs to the VPS16 family.</text>
</comment>
<proteinExistence type="evidence at protein level"/>
<keyword id="KW-0025">Alternative splicing</keyword>
<keyword id="KW-0472">Membrane</keyword>
<keyword id="KW-1185">Reference proteome</keyword>
<keyword id="KW-0926">Vacuole</keyword>
<organism>
    <name type="scientific">Arabidopsis thaliana</name>
    <name type="common">Mouse-ear cress</name>
    <dbReference type="NCBI Taxonomy" id="3702"/>
    <lineage>
        <taxon>Eukaryota</taxon>
        <taxon>Viridiplantae</taxon>
        <taxon>Streptophyta</taxon>
        <taxon>Embryophyta</taxon>
        <taxon>Tracheophyta</taxon>
        <taxon>Spermatophyta</taxon>
        <taxon>Magnoliopsida</taxon>
        <taxon>eudicotyledons</taxon>
        <taxon>Gunneridae</taxon>
        <taxon>Pentapetalae</taxon>
        <taxon>rosids</taxon>
        <taxon>malvids</taxon>
        <taxon>Brassicales</taxon>
        <taxon>Brassicaceae</taxon>
        <taxon>Camelineae</taxon>
        <taxon>Arabidopsis</taxon>
    </lineage>
</organism>
<name>VCL1_ARATH</name>